<comment type="function">
    <text evidence="1">This protein binds to 23S rRNA in the presence of protein L20.</text>
</comment>
<comment type="subunit">
    <text evidence="1">Part of the 50S ribosomal subunit. Contacts protein L20.</text>
</comment>
<comment type="similarity">
    <text evidence="1">Belongs to the bacterial ribosomal protein bL21 family.</text>
</comment>
<accession>B2IV10</accession>
<sequence length="135" mass="15104">MTYAIIETGGKQIRVEPGRFYDIELLPTEPDEKVTIDSVLLVQHDGAVSIGQPLVTGATVEGTVMRHYRGRKVLVYKMKPKKKTRKKRGHRQEITRLMIDSITLNGEVFVAQGEAEKETPVLDETPAEEVETAAE</sequence>
<organism>
    <name type="scientific">Nostoc punctiforme (strain ATCC 29133 / PCC 73102)</name>
    <dbReference type="NCBI Taxonomy" id="63737"/>
    <lineage>
        <taxon>Bacteria</taxon>
        <taxon>Bacillati</taxon>
        <taxon>Cyanobacteriota</taxon>
        <taxon>Cyanophyceae</taxon>
        <taxon>Nostocales</taxon>
        <taxon>Nostocaceae</taxon>
        <taxon>Nostoc</taxon>
    </lineage>
</organism>
<protein>
    <recommendedName>
        <fullName evidence="1">Large ribosomal subunit protein bL21</fullName>
    </recommendedName>
    <alternativeName>
        <fullName evidence="3">50S ribosomal protein L21</fullName>
    </alternativeName>
</protein>
<evidence type="ECO:0000255" key="1">
    <source>
        <dbReference type="HAMAP-Rule" id="MF_01363"/>
    </source>
</evidence>
<evidence type="ECO:0000256" key="2">
    <source>
        <dbReference type="SAM" id="MobiDB-lite"/>
    </source>
</evidence>
<evidence type="ECO:0000305" key="3"/>
<proteinExistence type="inferred from homology"/>
<name>RL21_NOSP7</name>
<feature type="chain" id="PRO_1000143827" description="Large ribosomal subunit protein bL21">
    <location>
        <begin position="1"/>
        <end position="135"/>
    </location>
</feature>
<feature type="region of interest" description="Disordered" evidence="2">
    <location>
        <begin position="114"/>
        <end position="135"/>
    </location>
</feature>
<feature type="compositionally biased region" description="Acidic residues" evidence="2">
    <location>
        <begin position="125"/>
        <end position="135"/>
    </location>
</feature>
<gene>
    <name evidence="1" type="primary">rplU</name>
    <name evidence="1" type="synonym">rpl21</name>
    <name type="ordered locus">Npun_R6114</name>
</gene>
<keyword id="KW-1185">Reference proteome</keyword>
<keyword id="KW-0687">Ribonucleoprotein</keyword>
<keyword id="KW-0689">Ribosomal protein</keyword>
<keyword id="KW-0694">RNA-binding</keyword>
<keyword id="KW-0699">rRNA-binding</keyword>
<reference key="1">
    <citation type="journal article" date="2013" name="Plant Physiol.">
        <title>A Nostoc punctiforme Sugar Transporter Necessary to Establish a Cyanobacterium-Plant Symbiosis.</title>
        <authorList>
            <person name="Ekman M."/>
            <person name="Picossi S."/>
            <person name="Campbell E.L."/>
            <person name="Meeks J.C."/>
            <person name="Flores E."/>
        </authorList>
    </citation>
    <scope>NUCLEOTIDE SEQUENCE [LARGE SCALE GENOMIC DNA]</scope>
    <source>
        <strain>ATCC 29133 / PCC 73102</strain>
    </source>
</reference>
<dbReference type="EMBL" id="CP001037">
    <property type="protein sequence ID" value="ACC84403.1"/>
    <property type="molecule type" value="Genomic_DNA"/>
</dbReference>
<dbReference type="RefSeq" id="WP_012412344.1">
    <property type="nucleotide sequence ID" value="NC_010628.1"/>
</dbReference>
<dbReference type="SMR" id="B2IV10"/>
<dbReference type="STRING" id="63737.Npun_R6114"/>
<dbReference type="EnsemblBacteria" id="ACC84403">
    <property type="protein sequence ID" value="ACC84403"/>
    <property type="gene ID" value="Npun_R6114"/>
</dbReference>
<dbReference type="KEGG" id="npu:Npun_R6114"/>
<dbReference type="eggNOG" id="COG0261">
    <property type="taxonomic scope" value="Bacteria"/>
</dbReference>
<dbReference type="HOGENOM" id="CLU_061463_1_2_3"/>
<dbReference type="OrthoDB" id="9813334at2"/>
<dbReference type="PhylomeDB" id="B2IV10"/>
<dbReference type="Proteomes" id="UP000001191">
    <property type="component" value="Chromosome"/>
</dbReference>
<dbReference type="GO" id="GO:0005737">
    <property type="term" value="C:cytoplasm"/>
    <property type="evidence" value="ECO:0007669"/>
    <property type="project" value="UniProtKB-ARBA"/>
</dbReference>
<dbReference type="GO" id="GO:1990904">
    <property type="term" value="C:ribonucleoprotein complex"/>
    <property type="evidence" value="ECO:0007669"/>
    <property type="project" value="UniProtKB-KW"/>
</dbReference>
<dbReference type="GO" id="GO:0005840">
    <property type="term" value="C:ribosome"/>
    <property type="evidence" value="ECO:0007669"/>
    <property type="project" value="UniProtKB-KW"/>
</dbReference>
<dbReference type="GO" id="GO:0019843">
    <property type="term" value="F:rRNA binding"/>
    <property type="evidence" value="ECO:0007669"/>
    <property type="project" value="UniProtKB-UniRule"/>
</dbReference>
<dbReference type="GO" id="GO:0003735">
    <property type="term" value="F:structural constituent of ribosome"/>
    <property type="evidence" value="ECO:0007669"/>
    <property type="project" value="InterPro"/>
</dbReference>
<dbReference type="GO" id="GO:0006412">
    <property type="term" value="P:translation"/>
    <property type="evidence" value="ECO:0007669"/>
    <property type="project" value="UniProtKB-UniRule"/>
</dbReference>
<dbReference type="HAMAP" id="MF_01363">
    <property type="entry name" value="Ribosomal_bL21"/>
    <property type="match status" value="1"/>
</dbReference>
<dbReference type="InterPro" id="IPR028909">
    <property type="entry name" value="bL21-like"/>
</dbReference>
<dbReference type="InterPro" id="IPR036164">
    <property type="entry name" value="bL21-like_sf"/>
</dbReference>
<dbReference type="InterPro" id="IPR001787">
    <property type="entry name" value="Ribosomal_bL21"/>
</dbReference>
<dbReference type="InterPro" id="IPR018258">
    <property type="entry name" value="Ribosomal_bL21_CS"/>
</dbReference>
<dbReference type="NCBIfam" id="TIGR00061">
    <property type="entry name" value="L21"/>
    <property type="match status" value="1"/>
</dbReference>
<dbReference type="PANTHER" id="PTHR21349">
    <property type="entry name" value="50S RIBOSOMAL PROTEIN L21"/>
    <property type="match status" value="1"/>
</dbReference>
<dbReference type="PANTHER" id="PTHR21349:SF0">
    <property type="entry name" value="LARGE RIBOSOMAL SUBUNIT PROTEIN BL21M"/>
    <property type="match status" value="1"/>
</dbReference>
<dbReference type="Pfam" id="PF00829">
    <property type="entry name" value="Ribosomal_L21p"/>
    <property type="match status" value="1"/>
</dbReference>
<dbReference type="SUPFAM" id="SSF141091">
    <property type="entry name" value="L21p-like"/>
    <property type="match status" value="1"/>
</dbReference>
<dbReference type="PROSITE" id="PS01169">
    <property type="entry name" value="RIBOSOMAL_L21"/>
    <property type="match status" value="1"/>
</dbReference>